<evidence type="ECO:0000255" key="1">
    <source>
        <dbReference type="HAMAP-Rule" id="MF_01633"/>
    </source>
</evidence>
<gene>
    <name evidence="1" type="primary">queC</name>
    <name type="ordered locus">Patl_2961</name>
</gene>
<protein>
    <recommendedName>
        <fullName evidence="1">7-cyano-7-deazaguanine synthase</fullName>
        <ecNumber evidence="1">6.3.4.20</ecNumber>
    </recommendedName>
    <alternativeName>
        <fullName evidence="1">7-cyano-7-carbaguanine synthase</fullName>
    </alternativeName>
    <alternativeName>
        <fullName evidence="1">PreQ(0) synthase</fullName>
    </alternativeName>
    <alternativeName>
        <fullName evidence="1">Queuosine biosynthesis protein QueC</fullName>
    </alternativeName>
</protein>
<comment type="function">
    <text evidence="1">Catalyzes the ATP-dependent conversion of 7-carboxy-7-deazaguanine (CDG) to 7-cyano-7-deazaguanine (preQ(0)).</text>
</comment>
<comment type="catalytic activity">
    <reaction evidence="1">
        <text>7-carboxy-7-deazaguanine + NH4(+) + ATP = 7-cyano-7-deazaguanine + ADP + phosphate + H2O + H(+)</text>
        <dbReference type="Rhea" id="RHEA:27982"/>
        <dbReference type="ChEBI" id="CHEBI:15377"/>
        <dbReference type="ChEBI" id="CHEBI:15378"/>
        <dbReference type="ChEBI" id="CHEBI:28938"/>
        <dbReference type="ChEBI" id="CHEBI:30616"/>
        <dbReference type="ChEBI" id="CHEBI:43474"/>
        <dbReference type="ChEBI" id="CHEBI:45075"/>
        <dbReference type="ChEBI" id="CHEBI:61036"/>
        <dbReference type="ChEBI" id="CHEBI:456216"/>
        <dbReference type="EC" id="6.3.4.20"/>
    </reaction>
</comment>
<comment type="cofactor">
    <cofactor evidence="1">
        <name>Zn(2+)</name>
        <dbReference type="ChEBI" id="CHEBI:29105"/>
    </cofactor>
    <text evidence="1">Binds 1 zinc ion per subunit.</text>
</comment>
<comment type="pathway">
    <text evidence="1">Purine metabolism; 7-cyano-7-deazaguanine biosynthesis.</text>
</comment>
<comment type="similarity">
    <text evidence="1">Belongs to the QueC family.</text>
</comment>
<organism>
    <name type="scientific">Pseudoalteromonas atlantica (strain T6c / ATCC BAA-1087)</name>
    <dbReference type="NCBI Taxonomy" id="3042615"/>
    <lineage>
        <taxon>Bacteria</taxon>
        <taxon>Pseudomonadati</taxon>
        <taxon>Pseudomonadota</taxon>
        <taxon>Gammaproteobacteria</taxon>
        <taxon>Alteromonadales</taxon>
        <taxon>Alteromonadaceae</taxon>
        <taxon>Paraglaciecola</taxon>
    </lineage>
</organism>
<feature type="chain" id="PRO_0000336931" description="7-cyano-7-deazaguanine synthase">
    <location>
        <begin position="1"/>
        <end position="218"/>
    </location>
</feature>
<feature type="binding site" evidence="1">
    <location>
        <begin position="9"/>
        <end position="19"/>
    </location>
    <ligand>
        <name>ATP</name>
        <dbReference type="ChEBI" id="CHEBI:30616"/>
    </ligand>
</feature>
<feature type="binding site" evidence="1">
    <location>
        <position position="185"/>
    </location>
    <ligand>
        <name>Zn(2+)</name>
        <dbReference type="ChEBI" id="CHEBI:29105"/>
    </ligand>
</feature>
<feature type="binding site" evidence="1">
    <location>
        <position position="193"/>
    </location>
    <ligand>
        <name>Zn(2+)</name>
        <dbReference type="ChEBI" id="CHEBI:29105"/>
    </ligand>
</feature>
<feature type="binding site" evidence="1">
    <location>
        <position position="196"/>
    </location>
    <ligand>
        <name>Zn(2+)</name>
        <dbReference type="ChEBI" id="CHEBI:29105"/>
    </ligand>
</feature>
<feature type="binding site" evidence="1">
    <location>
        <position position="199"/>
    </location>
    <ligand>
        <name>Zn(2+)</name>
        <dbReference type="ChEBI" id="CHEBI:29105"/>
    </ligand>
</feature>
<reference key="1">
    <citation type="submission" date="2006-06" db="EMBL/GenBank/DDBJ databases">
        <title>Complete sequence of Pseudoalteromonas atlantica T6c.</title>
        <authorList>
            <consortium name="US DOE Joint Genome Institute"/>
            <person name="Copeland A."/>
            <person name="Lucas S."/>
            <person name="Lapidus A."/>
            <person name="Barry K."/>
            <person name="Detter J.C."/>
            <person name="Glavina del Rio T."/>
            <person name="Hammon N."/>
            <person name="Israni S."/>
            <person name="Dalin E."/>
            <person name="Tice H."/>
            <person name="Pitluck S."/>
            <person name="Saunders E."/>
            <person name="Brettin T."/>
            <person name="Bruce D."/>
            <person name="Han C."/>
            <person name="Tapia R."/>
            <person name="Gilna P."/>
            <person name="Schmutz J."/>
            <person name="Larimer F."/>
            <person name="Land M."/>
            <person name="Hauser L."/>
            <person name="Kyrpides N."/>
            <person name="Kim E."/>
            <person name="Karls A.C."/>
            <person name="Bartlett D."/>
            <person name="Higgins B.P."/>
            <person name="Richardson P."/>
        </authorList>
    </citation>
    <scope>NUCLEOTIDE SEQUENCE [LARGE SCALE GENOMIC DNA]</scope>
    <source>
        <strain>T6c / ATCC BAA-1087</strain>
    </source>
</reference>
<proteinExistence type="inferred from homology"/>
<accession>Q15RL9</accession>
<keyword id="KW-0067">ATP-binding</keyword>
<keyword id="KW-0436">Ligase</keyword>
<keyword id="KW-0479">Metal-binding</keyword>
<keyword id="KW-0547">Nucleotide-binding</keyword>
<keyword id="KW-0671">Queuosine biosynthesis</keyword>
<keyword id="KW-0862">Zinc</keyword>
<name>QUEC_PSEA6</name>
<dbReference type="EC" id="6.3.4.20" evidence="1"/>
<dbReference type="EMBL" id="CP000388">
    <property type="protein sequence ID" value="ABG41469.1"/>
    <property type="molecule type" value="Genomic_DNA"/>
</dbReference>
<dbReference type="RefSeq" id="WP_011575723.1">
    <property type="nucleotide sequence ID" value="NC_008228.1"/>
</dbReference>
<dbReference type="SMR" id="Q15RL9"/>
<dbReference type="STRING" id="342610.Patl_2961"/>
<dbReference type="KEGG" id="pat:Patl_2961"/>
<dbReference type="eggNOG" id="COG0603">
    <property type="taxonomic scope" value="Bacteria"/>
</dbReference>
<dbReference type="HOGENOM" id="CLU_081854_1_0_6"/>
<dbReference type="OrthoDB" id="9789567at2"/>
<dbReference type="UniPathway" id="UPA00391"/>
<dbReference type="Proteomes" id="UP000001981">
    <property type="component" value="Chromosome"/>
</dbReference>
<dbReference type="GO" id="GO:0005524">
    <property type="term" value="F:ATP binding"/>
    <property type="evidence" value="ECO:0007669"/>
    <property type="project" value="UniProtKB-UniRule"/>
</dbReference>
<dbReference type="GO" id="GO:0016879">
    <property type="term" value="F:ligase activity, forming carbon-nitrogen bonds"/>
    <property type="evidence" value="ECO:0007669"/>
    <property type="project" value="UniProtKB-UniRule"/>
</dbReference>
<dbReference type="GO" id="GO:0008270">
    <property type="term" value="F:zinc ion binding"/>
    <property type="evidence" value="ECO:0007669"/>
    <property type="project" value="UniProtKB-UniRule"/>
</dbReference>
<dbReference type="GO" id="GO:0008616">
    <property type="term" value="P:queuosine biosynthetic process"/>
    <property type="evidence" value="ECO:0007669"/>
    <property type="project" value="UniProtKB-UniRule"/>
</dbReference>
<dbReference type="CDD" id="cd01995">
    <property type="entry name" value="QueC-like"/>
    <property type="match status" value="1"/>
</dbReference>
<dbReference type="Gene3D" id="3.40.50.620">
    <property type="entry name" value="HUPs"/>
    <property type="match status" value="1"/>
</dbReference>
<dbReference type="HAMAP" id="MF_01633">
    <property type="entry name" value="QueC"/>
    <property type="match status" value="1"/>
</dbReference>
<dbReference type="InterPro" id="IPR018317">
    <property type="entry name" value="QueC"/>
</dbReference>
<dbReference type="InterPro" id="IPR014729">
    <property type="entry name" value="Rossmann-like_a/b/a_fold"/>
</dbReference>
<dbReference type="NCBIfam" id="TIGR00364">
    <property type="entry name" value="7-cyano-7-deazaguanine synthase QueC"/>
    <property type="match status" value="1"/>
</dbReference>
<dbReference type="PANTHER" id="PTHR42914">
    <property type="entry name" value="7-CYANO-7-DEAZAGUANINE SYNTHASE"/>
    <property type="match status" value="1"/>
</dbReference>
<dbReference type="PANTHER" id="PTHR42914:SF1">
    <property type="entry name" value="7-CYANO-7-DEAZAGUANINE SYNTHASE"/>
    <property type="match status" value="1"/>
</dbReference>
<dbReference type="Pfam" id="PF06508">
    <property type="entry name" value="QueC"/>
    <property type="match status" value="1"/>
</dbReference>
<dbReference type="PIRSF" id="PIRSF006293">
    <property type="entry name" value="ExsB"/>
    <property type="match status" value="1"/>
</dbReference>
<dbReference type="SUPFAM" id="SSF52402">
    <property type="entry name" value="Adenine nucleotide alpha hydrolases-like"/>
    <property type="match status" value="1"/>
</dbReference>
<sequence>MVQKVVVIFSGGMDSFTVLNMAVKEGYEVHALSFNYGQRHSKELDYASRACITLGVAHKIIDISAINELIGGSSLTSDVDIPEGHYAEESMKSTVVPNRNMILLSMAVGYAVSLDANKVYYGAHSGDHDIYPDCRPEFVERMNDVCAIANYEKVEIVSPFLYQSKIDILTAGLNMGLDYNLTWTCYNGREKACGKCGACQERLEAFDKNNAQDPLEYE</sequence>